<keyword id="KW-1185">Reference proteome</keyword>
<keyword id="KW-0687">Ribonucleoprotein</keyword>
<keyword id="KW-0689">Ribosomal protein</keyword>
<feature type="chain" id="PRO_0000258555" description="Small ribosomal subunit protein uS10">
    <location>
        <begin position="1"/>
        <end position="105"/>
    </location>
</feature>
<sequence>MTTVSSDRIRIKLKAYDYRILDKAVAEIVDTARNTGASIAGPIPLPTNIHKFTVNRSVHVDKKSREQFEMRIHKRLMDILEPTQQTVDALGKLSLPAGVDVEIKL</sequence>
<accession>Q1MPR4</accession>
<protein>
    <recommendedName>
        <fullName evidence="1">Small ribosomal subunit protein uS10</fullName>
    </recommendedName>
    <alternativeName>
        <fullName evidence="2">30S ribosomal protein S10</fullName>
    </alternativeName>
</protein>
<comment type="function">
    <text evidence="1">Involved in the binding of tRNA to the ribosomes.</text>
</comment>
<comment type="subunit">
    <text evidence="1">Part of the 30S ribosomal subunit.</text>
</comment>
<comment type="similarity">
    <text evidence="1">Belongs to the universal ribosomal protein uS10 family.</text>
</comment>
<proteinExistence type="inferred from homology"/>
<name>RS10_LAWIP</name>
<dbReference type="EMBL" id="AM180252">
    <property type="protein sequence ID" value="CAJ55013.1"/>
    <property type="molecule type" value="Genomic_DNA"/>
</dbReference>
<dbReference type="RefSeq" id="WP_011527042.1">
    <property type="nucleotide sequence ID" value="NC_008011.1"/>
</dbReference>
<dbReference type="SMR" id="Q1MPR4"/>
<dbReference type="STRING" id="363253.LI0959"/>
<dbReference type="KEGG" id="lip:LI0959"/>
<dbReference type="eggNOG" id="COG0051">
    <property type="taxonomic scope" value="Bacteria"/>
</dbReference>
<dbReference type="HOGENOM" id="CLU_122625_1_3_7"/>
<dbReference type="OrthoDB" id="9804464at2"/>
<dbReference type="Proteomes" id="UP000002430">
    <property type="component" value="Chromosome"/>
</dbReference>
<dbReference type="GO" id="GO:1990904">
    <property type="term" value="C:ribonucleoprotein complex"/>
    <property type="evidence" value="ECO:0007669"/>
    <property type="project" value="UniProtKB-KW"/>
</dbReference>
<dbReference type="GO" id="GO:0005840">
    <property type="term" value="C:ribosome"/>
    <property type="evidence" value="ECO:0007669"/>
    <property type="project" value="UniProtKB-KW"/>
</dbReference>
<dbReference type="GO" id="GO:0003735">
    <property type="term" value="F:structural constituent of ribosome"/>
    <property type="evidence" value="ECO:0007669"/>
    <property type="project" value="InterPro"/>
</dbReference>
<dbReference type="GO" id="GO:0000049">
    <property type="term" value="F:tRNA binding"/>
    <property type="evidence" value="ECO:0007669"/>
    <property type="project" value="UniProtKB-UniRule"/>
</dbReference>
<dbReference type="GO" id="GO:0006412">
    <property type="term" value="P:translation"/>
    <property type="evidence" value="ECO:0007669"/>
    <property type="project" value="UniProtKB-UniRule"/>
</dbReference>
<dbReference type="FunFam" id="3.30.70.600:FF:000003">
    <property type="entry name" value="30S ribosomal protein S10"/>
    <property type="match status" value="1"/>
</dbReference>
<dbReference type="Gene3D" id="3.30.70.600">
    <property type="entry name" value="Ribosomal protein S10 domain"/>
    <property type="match status" value="1"/>
</dbReference>
<dbReference type="HAMAP" id="MF_00508">
    <property type="entry name" value="Ribosomal_uS10"/>
    <property type="match status" value="1"/>
</dbReference>
<dbReference type="InterPro" id="IPR001848">
    <property type="entry name" value="Ribosomal_uS10"/>
</dbReference>
<dbReference type="InterPro" id="IPR018268">
    <property type="entry name" value="Ribosomal_uS10_CS"/>
</dbReference>
<dbReference type="InterPro" id="IPR027486">
    <property type="entry name" value="Ribosomal_uS10_dom"/>
</dbReference>
<dbReference type="InterPro" id="IPR036838">
    <property type="entry name" value="Ribosomal_uS10_dom_sf"/>
</dbReference>
<dbReference type="NCBIfam" id="NF001861">
    <property type="entry name" value="PRK00596.1"/>
    <property type="match status" value="1"/>
</dbReference>
<dbReference type="NCBIfam" id="TIGR01049">
    <property type="entry name" value="rpsJ_bact"/>
    <property type="match status" value="1"/>
</dbReference>
<dbReference type="PANTHER" id="PTHR11700">
    <property type="entry name" value="30S RIBOSOMAL PROTEIN S10 FAMILY MEMBER"/>
    <property type="match status" value="1"/>
</dbReference>
<dbReference type="Pfam" id="PF00338">
    <property type="entry name" value="Ribosomal_S10"/>
    <property type="match status" value="1"/>
</dbReference>
<dbReference type="PRINTS" id="PR00971">
    <property type="entry name" value="RIBOSOMALS10"/>
</dbReference>
<dbReference type="SMART" id="SM01403">
    <property type="entry name" value="Ribosomal_S10"/>
    <property type="match status" value="1"/>
</dbReference>
<dbReference type="SUPFAM" id="SSF54999">
    <property type="entry name" value="Ribosomal protein S10"/>
    <property type="match status" value="1"/>
</dbReference>
<dbReference type="PROSITE" id="PS00361">
    <property type="entry name" value="RIBOSOMAL_S10"/>
    <property type="match status" value="1"/>
</dbReference>
<reference key="1">
    <citation type="submission" date="2005-11" db="EMBL/GenBank/DDBJ databases">
        <title>The complete genome sequence of Lawsonia intracellularis: the causative agent of proliferative enteropathy.</title>
        <authorList>
            <person name="Kaur K."/>
            <person name="Zhang Q."/>
            <person name="Beckler D."/>
            <person name="Munir S."/>
            <person name="Li L."/>
            <person name="Kinsley K."/>
            <person name="Herron L."/>
            <person name="Peterson A."/>
            <person name="May B."/>
            <person name="Singh S."/>
            <person name="Gebhart C."/>
            <person name="Kapur V."/>
        </authorList>
    </citation>
    <scope>NUCLEOTIDE SEQUENCE [LARGE SCALE GENOMIC DNA]</scope>
    <source>
        <strain>PHE/MN1-00</strain>
    </source>
</reference>
<evidence type="ECO:0000255" key="1">
    <source>
        <dbReference type="HAMAP-Rule" id="MF_00508"/>
    </source>
</evidence>
<evidence type="ECO:0000305" key="2"/>
<gene>
    <name evidence="1" type="primary">rpsJ</name>
    <name type="ordered locus">LI0959</name>
</gene>
<organism>
    <name type="scientific">Lawsonia intracellularis (strain PHE/MN1-00)</name>
    <dbReference type="NCBI Taxonomy" id="363253"/>
    <lineage>
        <taxon>Bacteria</taxon>
        <taxon>Pseudomonadati</taxon>
        <taxon>Thermodesulfobacteriota</taxon>
        <taxon>Desulfovibrionia</taxon>
        <taxon>Desulfovibrionales</taxon>
        <taxon>Desulfovibrionaceae</taxon>
        <taxon>Lawsonia</taxon>
    </lineage>
</organism>